<comment type="function">
    <text evidence="1">Mannosyltransferase involved in glycosylphosphatidylinositol-anchor biosynthesis. Transfers the second mannose to the glycosylphosphatidylinositol during GPI precursor assembly. Required for the GPI-mediated endoplasmic reticulum exit and proper targeting to the cell surface of chp. Required for GPI-mediated membrane attachment of chp, qsm and Cont. Essential for microvillar stability in the rhabdomere (By similarity).</text>
</comment>
<comment type="pathway">
    <text>Glycolipid biosynthesis; glycosylphosphatidylinositol-anchor biosynthesis.</text>
</comment>
<comment type="subcellular location">
    <subcellularLocation>
        <location evidence="1">Endoplasmic reticulum membrane</location>
        <topology evidence="1">Multi-pass membrane protein</topology>
    </subcellularLocation>
</comment>
<comment type="similarity">
    <text evidence="3">Belongs to the PIGV family.</text>
</comment>
<comment type="caution">
    <text evidence="3">Was originally named veg by similarity to the D.melanogaster ortholog. However, it was later shown that the veg phenotype does not map to this protein. It is still not known which gene corresponds to the veg phenotype.</text>
</comment>
<keyword id="KW-0256">Endoplasmic reticulum</keyword>
<keyword id="KW-0328">Glycosyltransferase</keyword>
<keyword id="KW-0337">GPI-anchor biosynthesis</keyword>
<keyword id="KW-0472">Membrane</keyword>
<keyword id="KW-1185">Reference proteome</keyword>
<keyword id="KW-0808">Transferase</keyword>
<keyword id="KW-0812">Transmembrane</keyword>
<keyword id="KW-1133">Transmembrane helix</keyword>
<accession>Q290J8</accession>
<dbReference type="EC" id="2.4.1.-"/>
<dbReference type="EMBL" id="CM000071">
    <property type="protein sequence ID" value="EAL25364.1"/>
    <property type="molecule type" value="Genomic_DNA"/>
</dbReference>
<dbReference type="RefSeq" id="XP_001360789.1">
    <property type="nucleotide sequence ID" value="XM_001360752.3"/>
</dbReference>
<dbReference type="FunCoup" id="Q290J8">
    <property type="interactions" value="579"/>
</dbReference>
<dbReference type="STRING" id="46245.Q290J8"/>
<dbReference type="CAZy" id="GT76">
    <property type="family name" value="Glycosyltransferase Family 76"/>
</dbReference>
<dbReference type="EnsemblMetazoa" id="FBtr0279341">
    <property type="protein sequence ID" value="FBpp0277779"/>
    <property type="gene ID" value="FBgn0079753"/>
</dbReference>
<dbReference type="KEGG" id="dpo:4804187"/>
<dbReference type="CTD" id="19835383"/>
<dbReference type="eggNOG" id="KOG2647">
    <property type="taxonomic scope" value="Eukaryota"/>
</dbReference>
<dbReference type="HOGENOM" id="CLU_029048_3_2_1"/>
<dbReference type="InParanoid" id="Q290J8"/>
<dbReference type="OMA" id="GALFIWC"/>
<dbReference type="PhylomeDB" id="Q290J8"/>
<dbReference type="UniPathway" id="UPA00196"/>
<dbReference type="Proteomes" id="UP000001819">
    <property type="component" value="Chromosome 3"/>
</dbReference>
<dbReference type="Bgee" id="FBgn0079753">
    <property type="expression patterns" value="Expressed in female reproductive system and 3 other cell types or tissues"/>
</dbReference>
<dbReference type="GO" id="GO:0005789">
    <property type="term" value="C:endoplasmic reticulum membrane"/>
    <property type="evidence" value="ECO:0007669"/>
    <property type="project" value="UniProtKB-SubCell"/>
</dbReference>
<dbReference type="GO" id="GO:0031501">
    <property type="term" value="C:mannosyltransferase complex"/>
    <property type="evidence" value="ECO:0007669"/>
    <property type="project" value="TreeGrafter"/>
</dbReference>
<dbReference type="GO" id="GO:0000009">
    <property type="term" value="F:alpha-1,6-mannosyltransferase activity"/>
    <property type="evidence" value="ECO:0007669"/>
    <property type="project" value="InterPro"/>
</dbReference>
<dbReference type="GO" id="GO:0004376">
    <property type="term" value="F:glycolipid mannosyltransferase activity"/>
    <property type="evidence" value="ECO:0007669"/>
    <property type="project" value="InterPro"/>
</dbReference>
<dbReference type="GO" id="GO:0006506">
    <property type="term" value="P:GPI anchor biosynthetic process"/>
    <property type="evidence" value="ECO:0007669"/>
    <property type="project" value="UniProtKB-UniPathway"/>
</dbReference>
<dbReference type="InterPro" id="IPR007315">
    <property type="entry name" value="PIG-V/Gpi18"/>
</dbReference>
<dbReference type="PANTHER" id="PTHR12468">
    <property type="entry name" value="GPI MANNOSYLTRANSFERASE 2"/>
    <property type="match status" value="1"/>
</dbReference>
<dbReference type="PANTHER" id="PTHR12468:SF2">
    <property type="entry name" value="GPI MANNOSYLTRANSFERASE 2"/>
    <property type="match status" value="1"/>
</dbReference>
<dbReference type="Pfam" id="PF04188">
    <property type="entry name" value="Mannosyl_trans2"/>
    <property type="match status" value="1"/>
</dbReference>
<reference key="1">
    <citation type="journal article" date="2005" name="Genome Res.">
        <title>Comparative genome sequencing of Drosophila pseudoobscura: chromosomal, gene, and cis-element evolution.</title>
        <authorList>
            <person name="Richards S."/>
            <person name="Liu Y."/>
            <person name="Bettencourt B.R."/>
            <person name="Hradecky P."/>
            <person name="Letovsky S."/>
            <person name="Nielsen R."/>
            <person name="Thornton K."/>
            <person name="Hubisz M.J."/>
            <person name="Chen R."/>
            <person name="Meisel R.P."/>
            <person name="Couronne O."/>
            <person name="Hua S."/>
            <person name="Smith M.A."/>
            <person name="Zhang P."/>
            <person name="Liu J."/>
            <person name="Bussemaker H.J."/>
            <person name="van Batenburg M.F."/>
            <person name="Howells S.L."/>
            <person name="Scherer S.E."/>
            <person name="Sodergren E."/>
            <person name="Matthews B.B."/>
            <person name="Crosby M.A."/>
            <person name="Schroeder A.J."/>
            <person name="Ortiz-Barrientos D."/>
            <person name="Rives C.M."/>
            <person name="Metzker M.L."/>
            <person name="Muzny D.M."/>
            <person name="Scott G."/>
            <person name="Steffen D."/>
            <person name="Wheeler D.A."/>
            <person name="Worley K.C."/>
            <person name="Havlak P."/>
            <person name="Durbin K.J."/>
            <person name="Egan A."/>
            <person name="Gill R."/>
            <person name="Hume J."/>
            <person name="Morgan M.B."/>
            <person name="Miner G."/>
            <person name="Hamilton C."/>
            <person name="Huang Y."/>
            <person name="Waldron L."/>
            <person name="Verduzco D."/>
            <person name="Clerc-Blankenburg K.P."/>
            <person name="Dubchak I."/>
            <person name="Noor M.A.F."/>
            <person name="Anderson W."/>
            <person name="White K.P."/>
            <person name="Clark A.G."/>
            <person name="Schaeffer S.W."/>
            <person name="Gelbart W.M."/>
            <person name="Weinstock G.M."/>
            <person name="Gibbs R.A."/>
        </authorList>
    </citation>
    <scope>NUCLEOTIDE SEQUENCE [LARGE SCALE GENOMIC DNA]</scope>
    <source>
        <strain>MV2-25 / Tucson 14011-0121.94</strain>
    </source>
</reference>
<organism>
    <name type="scientific">Drosophila pseudoobscura pseudoobscura</name>
    <name type="common">Fruit fly</name>
    <dbReference type="NCBI Taxonomy" id="46245"/>
    <lineage>
        <taxon>Eukaryota</taxon>
        <taxon>Metazoa</taxon>
        <taxon>Ecdysozoa</taxon>
        <taxon>Arthropoda</taxon>
        <taxon>Hexapoda</taxon>
        <taxon>Insecta</taxon>
        <taxon>Pterygota</taxon>
        <taxon>Neoptera</taxon>
        <taxon>Endopterygota</taxon>
        <taxon>Diptera</taxon>
        <taxon>Brachycera</taxon>
        <taxon>Muscomorpha</taxon>
        <taxon>Ephydroidea</taxon>
        <taxon>Drosophilidae</taxon>
        <taxon>Drosophila</taxon>
        <taxon>Sophophora</taxon>
    </lineage>
</organism>
<sequence length="452" mass="52131">MMEKVTKLALTSRVMVLVVQLLANFATPDHKPDVFRMPQSEGPKKNGPFPWLDELVLQSLSGLRHWDGEYFLHIASNLYTYENTLAFYPLYPVVVRHVAQACQHLGIPLSRDALILLVAVALNVLIFCKTANVLYKLTQRMFNDHNKSWNAALIFCFNPASIFFSAAYSETFFAFASFSLMLECMRSEKDFRTFRLGAALTGCFVCRSNGLLTLGFPLYFLARHILLSTGSVQRCWQLFKMGLAMLVALGILHTYYFYIYRLYCLPDVKVQHAQHVVDYAKERSFLISGQASVGSPWCGYTLPFPYTYVQSHYWDVGFLRYYKWKQLPNFLLALPMLLFMHWHCYDYIRKLVANTWSKISPSEYQGILKEHISFPFVLHAAVLTLVCTLYVHIQVSTRLLASATPVFYWFAADYMPNTFQLSFRSKAGVLFIWCLTYSLVGTVLFSNNYPWT</sequence>
<gene>
    <name type="ORF">GA19757</name>
</gene>
<protein>
    <recommendedName>
        <fullName>GPI mannosyltransferase 2</fullName>
        <ecNumber>2.4.1.-</ecNumber>
    </recommendedName>
    <alternativeName>
        <fullName>GPI mannosyltransferase II</fullName>
        <shortName>GPI-MT-II</shortName>
    </alternativeName>
</protein>
<feature type="chain" id="PRO_0000246238" description="GPI mannosyltransferase 2">
    <location>
        <begin position="1"/>
        <end position="452"/>
    </location>
</feature>
<feature type="topological domain" description="Cytoplasmic" evidence="2">
    <location>
        <begin position="1"/>
        <end position="7"/>
    </location>
</feature>
<feature type="transmembrane region" description="Helical" evidence="2">
    <location>
        <begin position="8"/>
        <end position="28"/>
    </location>
</feature>
<feature type="topological domain" description="Lumenal" evidence="2">
    <location>
        <begin position="29"/>
        <end position="113"/>
    </location>
</feature>
<feature type="transmembrane region" description="Helical" evidence="2">
    <location>
        <begin position="114"/>
        <end position="134"/>
    </location>
</feature>
<feature type="topological domain" description="Cytoplasmic" evidence="2">
    <location>
        <begin position="135"/>
        <end position="161"/>
    </location>
</feature>
<feature type="transmembrane region" description="Helical" evidence="2">
    <location>
        <begin position="162"/>
        <end position="182"/>
    </location>
</feature>
<feature type="topological domain" description="Lumenal" evidence="2">
    <location>
        <begin position="183"/>
        <end position="209"/>
    </location>
</feature>
<feature type="transmembrane region" description="Helical" evidence="2">
    <location>
        <begin position="210"/>
        <end position="230"/>
    </location>
</feature>
<feature type="topological domain" description="Cytoplasmic" evidence="2">
    <location>
        <begin position="231"/>
        <end position="238"/>
    </location>
</feature>
<feature type="transmembrane region" description="Helical" evidence="2">
    <location>
        <begin position="239"/>
        <end position="259"/>
    </location>
</feature>
<feature type="topological domain" description="Lumenal" evidence="2">
    <location>
        <begin position="260"/>
        <end position="284"/>
    </location>
</feature>
<feature type="transmembrane region" description="Helical" evidence="2">
    <location>
        <begin position="285"/>
        <end position="305"/>
    </location>
</feature>
<feature type="topological domain" description="Cytoplasmic" evidence="2">
    <location>
        <begin position="306"/>
        <end position="327"/>
    </location>
</feature>
<feature type="transmembrane region" description="Helical" evidence="2">
    <location>
        <begin position="328"/>
        <end position="348"/>
    </location>
</feature>
<feature type="topological domain" description="Lumenal" evidence="2">
    <location>
        <begin position="349"/>
        <end position="370"/>
    </location>
</feature>
<feature type="transmembrane region" description="Helical" evidence="2">
    <location>
        <begin position="371"/>
        <end position="391"/>
    </location>
</feature>
<feature type="topological domain" description="Cytoplasmic" evidence="2">
    <location>
        <begin position="392"/>
        <end position="398"/>
    </location>
</feature>
<feature type="transmembrane region" description="Helical" evidence="2">
    <location>
        <begin position="399"/>
        <end position="419"/>
    </location>
</feature>
<feature type="topological domain" description="Lumenal" evidence="2">
    <location>
        <begin position="420"/>
        <end position="426"/>
    </location>
</feature>
<feature type="transmembrane region" description="Helical" evidence="2">
    <location>
        <begin position="427"/>
        <end position="447"/>
    </location>
</feature>
<feature type="topological domain" description="Cytoplasmic" evidence="2">
    <location>
        <begin position="448"/>
        <end position="452"/>
    </location>
</feature>
<evidence type="ECO:0000250" key="1"/>
<evidence type="ECO:0000255" key="2"/>
<evidence type="ECO:0000305" key="3"/>
<proteinExistence type="inferred from homology"/>
<name>PIGV_DROPS</name>